<proteinExistence type="inferred from homology"/>
<dbReference type="EMBL" id="AM233362">
    <property type="protein sequence ID" value="CAJ79337.1"/>
    <property type="molecule type" value="Genomic_DNA"/>
</dbReference>
<dbReference type="RefSeq" id="WP_003015654.1">
    <property type="nucleotide sequence ID" value="NZ_CP009694.1"/>
</dbReference>
<dbReference type="SMR" id="Q2A3T5"/>
<dbReference type="GeneID" id="75265215"/>
<dbReference type="KEGG" id="ftl:FTL_0898"/>
<dbReference type="Proteomes" id="UP000001944">
    <property type="component" value="Chromosome"/>
</dbReference>
<dbReference type="GO" id="GO:0005829">
    <property type="term" value="C:cytosol"/>
    <property type="evidence" value="ECO:0007669"/>
    <property type="project" value="TreeGrafter"/>
</dbReference>
<dbReference type="GO" id="GO:0003723">
    <property type="term" value="F:RNA binding"/>
    <property type="evidence" value="ECO:0007669"/>
    <property type="project" value="UniProtKB-UniRule"/>
</dbReference>
<dbReference type="GO" id="GO:0006355">
    <property type="term" value="P:regulation of DNA-templated transcription"/>
    <property type="evidence" value="ECO:0007669"/>
    <property type="project" value="InterPro"/>
</dbReference>
<dbReference type="GO" id="GO:0043487">
    <property type="term" value="P:regulation of RNA stability"/>
    <property type="evidence" value="ECO:0007669"/>
    <property type="project" value="TreeGrafter"/>
</dbReference>
<dbReference type="GO" id="GO:0045974">
    <property type="term" value="P:regulation of translation, ncRNA-mediated"/>
    <property type="evidence" value="ECO:0007669"/>
    <property type="project" value="TreeGrafter"/>
</dbReference>
<dbReference type="CDD" id="cd01716">
    <property type="entry name" value="Hfq"/>
    <property type="match status" value="1"/>
</dbReference>
<dbReference type="FunFam" id="2.30.30.100:FF:000001">
    <property type="entry name" value="RNA-binding protein Hfq"/>
    <property type="match status" value="1"/>
</dbReference>
<dbReference type="Gene3D" id="2.30.30.100">
    <property type="match status" value="1"/>
</dbReference>
<dbReference type="HAMAP" id="MF_00436">
    <property type="entry name" value="Hfq"/>
    <property type="match status" value="1"/>
</dbReference>
<dbReference type="InterPro" id="IPR005001">
    <property type="entry name" value="Hfq"/>
</dbReference>
<dbReference type="InterPro" id="IPR010920">
    <property type="entry name" value="LSM_dom_sf"/>
</dbReference>
<dbReference type="InterPro" id="IPR047575">
    <property type="entry name" value="Sm"/>
</dbReference>
<dbReference type="NCBIfam" id="TIGR02383">
    <property type="entry name" value="Hfq"/>
    <property type="match status" value="1"/>
</dbReference>
<dbReference type="NCBIfam" id="NF001602">
    <property type="entry name" value="PRK00395.1"/>
    <property type="match status" value="1"/>
</dbReference>
<dbReference type="PANTHER" id="PTHR34772">
    <property type="entry name" value="RNA-BINDING PROTEIN HFQ"/>
    <property type="match status" value="1"/>
</dbReference>
<dbReference type="PANTHER" id="PTHR34772:SF1">
    <property type="entry name" value="RNA-BINDING PROTEIN HFQ"/>
    <property type="match status" value="1"/>
</dbReference>
<dbReference type="Pfam" id="PF17209">
    <property type="entry name" value="Hfq"/>
    <property type="match status" value="1"/>
</dbReference>
<dbReference type="SUPFAM" id="SSF50182">
    <property type="entry name" value="Sm-like ribonucleoproteins"/>
    <property type="match status" value="1"/>
</dbReference>
<dbReference type="PROSITE" id="PS52002">
    <property type="entry name" value="SM"/>
    <property type="match status" value="1"/>
</dbReference>
<comment type="function">
    <text evidence="1">RNA chaperone that binds small regulatory RNA (sRNAs) and mRNAs to facilitate mRNA translational regulation in response to envelope stress, environmental stress and changes in metabolite concentrations. Also binds with high specificity to tRNAs.</text>
</comment>
<comment type="subunit">
    <text evidence="1">Homohexamer.</text>
</comment>
<comment type="similarity">
    <text evidence="1">Belongs to the Hfq family.</text>
</comment>
<accession>Q2A3T5</accession>
<feature type="chain" id="PRO_0000265156" description="RNA-binding protein Hfq">
    <location>
        <begin position="1"/>
        <end position="109"/>
    </location>
</feature>
<feature type="domain" description="Sm" evidence="2">
    <location>
        <begin position="9"/>
        <end position="68"/>
    </location>
</feature>
<feature type="region of interest" description="Disordered" evidence="3">
    <location>
        <begin position="77"/>
        <end position="109"/>
    </location>
</feature>
<organism>
    <name type="scientific">Francisella tularensis subsp. holarctica (strain LVS)</name>
    <dbReference type="NCBI Taxonomy" id="376619"/>
    <lineage>
        <taxon>Bacteria</taxon>
        <taxon>Pseudomonadati</taxon>
        <taxon>Pseudomonadota</taxon>
        <taxon>Gammaproteobacteria</taxon>
        <taxon>Thiotrichales</taxon>
        <taxon>Francisellaceae</taxon>
        <taxon>Francisella</taxon>
    </lineage>
</organism>
<name>HFQ_FRATH</name>
<sequence length="109" mass="12484">MSRISSLQDPFLNALRKEKVSVSVYLVNGIKLQGQVEAFDQFCIVLRNTVNQMVYKHAISTIVPAKSVRMVYSSFNPYHQNSNDEQDENVDDIHSDDLEIQENEGNIHE</sequence>
<reference key="1">
    <citation type="submission" date="2006-03" db="EMBL/GenBank/DDBJ databases">
        <title>Complete genome sequence of Francisella tularensis LVS (Live Vaccine Strain).</title>
        <authorList>
            <person name="Chain P."/>
            <person name="Larimer F."/>
            <person name="Land M."/>
            <person name="Stilwagen S."/>
            <person name="Larsson P."/>
            <person name="Bearden S."/>
            <person name="Chu M."/>
            <person name="Oyston P."/>
            <person name="Forsman M."/>
            <person name="Andersson S."/>
            <person name="Lindler L."/>
            <person name="Titball R."/>
            <person name="Garcia E."/>
        </authorList>
    </citation>
    <scope>NUCLEOTIDE SEQUENCE [LARGE SCALE GENOMIC DNA]</scope>
    <source>
        <strain>LVS</strain>
    </source>
</reference>
<protein>
    <recommendedName>
        <fullName evidence="1">RNA-binding protein Hfq</fullName>
    </recommendedName>
</protein>
<gene>
    <name evidence="1" type="primary">hfq</name>
    <name type="ordered locus">FTL_0898</name>
</gene>
<keyword id="KW-1185">Reference proteome</keyword>
<keyword id="KW-0694">RNA-binding</keyword>
<keyword id="KW-0346">Stress response</keyword>
<evidence type="ECO:0000255" key="1">
    <source>
        <dbReference type="HAMAP-Rule" id="MF_00436"/>
    </source>
</evidence>
<evidence type="ECO:0000255" key="2">
    <source>
        <dbReference type="PROSITE-ProRule" id="PRU01346"/>
    </source>
</evidence>
<evidence type="ECO:0000256" key="3">
    <source>
        <dbReference type="SAM" id="MobiDB-lite"/>
    </source>
</evidence>